<dbReference type="EMBL" id="CP001398">
    <property type="protein sequence ID" value="ACS32645.1"/>
    <property type="molecule type" value="Genomic_DNA"/>
</dbReference>
<dbReference type="RefSeq" id="WP_015857765.1">
    <property type="nucleotide sequence ID" value="NC_012804.1"/>
</dbReference>
<dbReference type="SMR" id="C5A333"/>
<dbReference type="STRING" id="593117.TGAM_0143"/>
<dbReference type="PaxDb" id="593117-TGAM_0143"/>
<dbReference type="GeneID" id="7988723"/>
<dbReference type="KEGG" id="tga:TGAM_0143"/>
<dbReference type="PATRIC" id="fig|593117.10.peg.146"/>
<dbReference type="eggNOG" id="arCOG00869">
    <property type="taxonomic scope" value="Archaea"/>
</dbReference>
<dbReference type="HOGENOM" id="CLU_105846_1_0_2"/>
<dbReference type="OrthoDB" id="4691at2157"/>
<dbReference type="Proteomes" id="UP000001488">
    <property type="component" value="Chromosome"/>
</dbReference>
<dbReference type="GO" id="GO:0005886">
    <property type="term" value="C:plasma membrane"/>
    <property type="evidence" value="ECO:0007669"/>
    <property type="project" value="UniProtKB-SubCell"/>
</dbReference>
<dbReference type="GO" id="GO:0033178">
    <property type="term" value="C:proton-transporting two-sector ATPase complex, catalytic domain"/>
    <property type="evidence" value="ECO:0007669"/>
    <property type="project" value="InterPro"/>
</dbReference>
<dbReference type="GO" id="GO:0005524">
    <property type="term" value="F:ATP binding"/>
    <property type="evidence" value="ECO:0007669"/>
    <property type="project" value="UniProtKB-UniRule"/>
</dbReference>
<dbReference type="GO" id="GO:0046933">
    <property type="term" value="F:proton-transporting ATP synthase activity, rotational mechanism"/>
    <property type="evidence" value="ECO:0007669"/>
    <property type="project" value="UniProtKB-UniRule"/>
</dbReference>
<dbReference type="GO" id="GO:0046961">
    <property type="term" value="F:proton-transporting ATPase activity, rotational mechanism"/>
    <property type="evidence" value="ECO:0007669"/>
    <property type="project" value="InterPro"/>
</dbReference>
<dbReference type="GO" id="GO:0042777">
    <property type="term" value="P:proton motive force-driven plasma membrane ATP synthesis"/>
    <property type="evidence" value="ECO:0007669"/>
    <property type="project" value="UniProtKB-UniRule"/>
</dbReference>
<dbReference type="CDD" id="cd06503">
    <property type="entry name" value="ATP-synt_Fo_b"/>
    <property type="match status" value="1"/>
</dbReference>
<dbReference type="Gene3D" id="3.30.2320.30">
    <property type="entry name" value="ATP synthase, E subunit, C-terminal"/>
    <property type="match status" value="1"/>
</dbReference>
<dbReference type="Gene3D" id="1.20.5.620">
    <property type="entry name" value="F1F0 ATP synthase subunit B, membrane domain"/>
    <property type="match status" value="1"/>
</dbReference>
<dbReference type="HAMAP" id="MF_00311">
    <property type="entry name" value="ATP_synth_E_arch"/>
    <property type="match status" value="1"/>
</dbReference>
<dbReference type="InterPro" id="IPR038495">
    <property type="entry name" value="ATPase_E_C"/>
</dbReference>
<dbReference type="InterPro" id="IPR002842">
    <property type="entry name" value="ATPase_V1_Esu"/>
</dbReference>
<dbReference type="NCBIfam" id="NF003049">
    <property type="entry name" value="PRK03963.1"/>
    <property type="match status" value="1"/>
</dbReference>
<dbReference type="PANTHER" id="PTHR45715">
    <property type="entry name" value="ATPASE H+-TRANSPORTING V1 SUBUNIT E1A-RELATED"/>
    <property type="match status" value="1"/>
</dbReference>
<dbReference type="Pfam" id="PF01991">
    <property type="entry name" value="vATP-synt_E"/>
    <property type="match status" value="1"/>
</dbReference>
<dbReference type="SUPFAM" id="SSF160527">
    <property type="entry name" value="V-type ATPase subunit E-like"/>
    <property type="match status" value="1"/>
</dbReference>
<proteinExistence type="inferred from homology"/>
<accession>C5A333</accession>
<name>AATE_THEGJ</name>
<protein>
    <recommendedName>
        <fullName evidence="1">A-type ATP synthase subunit E</fullName>
    </recommendedName>
</protein>
<comment type="function">
    <text evidence="1">Component of the A-type ATP synthase that produces ATP from ADP in the presence of a proton gradient across the membrane.</text>
</comment>
<comment type="subunit">
    <text evidence="1">Has multiple subunits with at least A(3), B(3), C, D, E, F, H, I and proteolipid K(x).</text>
</comment>
<comment type="subcellular location">
    <subcellularLocation>
        <location evidence="1">Cell membrane</location>
        <topology evidence="1">Peripheral membrane protein</topology>
    </subcellularLocation>
</comment>
<comment type="similarity">
    <text evidence="1">Belongs to the V-ATPase E subunit family.</text>
</comment>
<reference key="1">
    <citation type="journal article" date="2007" name="Genome Biol.">
        <title>Genome analysis and genome-wide proteomics of Thermococcus gammatolerans, the most radioresistant organism known amongst the Archaea.</title>
        <authorList>
            <person name="Zivanovic Y."/>
            <person name="Armengaud J."/>
            <person name="Lagorce A."/>
            <person name="Leplat C."/>
            <person name="Guerin P."/>
            <person name="Dutertre M."/>
            <person name="Anthouard V."/>
            <person name="Forterre P."/>
            <person name="Wincker P."/>
            <person name="Confalonieri F."/>
        </authorList>
    </citation>
    <scope>NUCLEOTIDE SEQUENCE [LARGE SCALE GENOMIC DNA]</scope>
    <source>
        <strain>DSM 15229 / JCM 11827 / EJ3</strain>
    </source>
</reference>
<keyword id="KW-0066">ATP synthesis</keyword>
<keyword id="KW-1003">Cell membrane</keyword>
<keyword id="KW-0375">Hydrogen ion transport</keyword>
<keyword id="KW-0406">Ion transport</keyword>
<keyword id="KW-0472">Membrane</keyword>
<keyword id="KW-1185">Reference proteome</keyword>
<keyword id="KW-0813">Transport</keyword>
<sequence>MEGAELIIQEIHREAEQKIQYILSEAQREAEKLKEEARKRAQSQAEWILRKAKTQAEIEKQRIIANAKLEVRRKKLAVQEELIGEVLSAMREKLAALPDDEYFEALVSLTKEAIEELGTKKIVLRSNERTLKLIDSRMEEFSEKVGVEVSLGEPIECIGGVLVESPDGTVRVDNTFDARIERLESELRATVAKALFG</sequence>
<gene>
    <name evidence="1" type="primary">atpE</name>
    <name type="ordered locus">TGAM_0143</name>
</gene>
<feature type="chain" id="PRO_1000205057" description="A-type ATP synthase subunit E">
    <location>
        <begin position="1"/>
        <end position="197"/>
    </location>
</feature>
<organism>
    <name type="scientific">Thermococcus gammatolerans (strain DSM 15229 / JCM 11827 / EJ3)</name>
    <dbReference type="NCBI Taxonomy" id="593117"/>
    <lineage>
        <taxon>Archaea</taxon>
        <taxon>Methanobacteriati</taxon>
        <taxon>Methanobacteriota</taxon>
        <taxon>Thermococci</taxon>
        <taxon>Thermococcales</taxon>
        <taxon>Thermococcaceae</taxon>
        <taxon>Thermococcus</taxon>
    </lineage>
</organism>
<evidence type="ECO:0000255" key="1">
    <source>
        <dbReference type="HAMAP-Rule" id="MF_00311"/>
    </source>
</evidence>